<feature type="chain" id="PRO_0000049786" description="Bis(5'-nucleosyl)-tetraphosphatase, symmetrical">
    <location>
        <begin position="1"/>
        <end position="186"/>
    </location>
</feature>
<feature type="domain" description="HD" evidence="3">
    <location>
        <begin position="18"/>
        <end position="132"/>
    </location>
</feature>
<feature type="binding site" evidence="2">
    <location>
        <position position="21"/>
    </location>
    <ligand>
        <name>ADP</name>
        <dbReference type="ChEBI" id="CHEBI:456216"/>
    </ligand>
</feature>
<feature type="binding site" evidence="2">
    <location>
        <position position="21"/>
    </location>
    <ligand>
        <name>Fe cation</name>
        <dbReference type="ChEBI" id="CHEBI:24875"/>
    </ligand>
</feature>
<feature type="binding site" evidence="2">
    <location>
        <position position="50"/>
    </location>
    <ligand>
        <name>Fe cation</name>
        <dbReference type="ChEBI" id="CHEBI:24875"/>
    </ligand>
</feature>
<feature type="binding site" evidence="2">
    <location>
        <begin position="51"/>
        <end position="54"/>
    </location>
    <ligand>
        <name>ADP</name>
        <dbReference type="ChEBI" id="CHEBI:456216"/>
    </ligand>
</feature>
<feature type="binding site" evidence="2">
    <location>
        <position position="51"/>
    </location>
    <ligand>
        <name>Fe cation</name>
        <dbReference type="ChEBI" id="CHEBI:24875"/>
    </ligand>
</feature>
<feature type="binding site" evidence="2">
    <location>
        <position position="83"/>
    </location>
    <ligand>
        <name>ADP</name>
        <dbReference type="ChEBI" id="CHEBI:456216"/>
    </ligand>
</feature>
<feature type="binding site" evidence="2">
    <location>
        <begin position="109"/>
        <end position="110"/>
    </location>
    <ligand>
        <name>ADP</name>
        <dbReference type="ChEBI" id="CHEBI:456216"/>
    </ligand>
</feature>
<feature type="binding site" evidence="2">
    <location>
        <position position="127"/>
    </location>
    <ligand>
        <name>ADP</name>
        <dbReference type="ChEBI" id="CHEBI:456216"/>
    </ligand>
</feature>
<feature type="binding site" evidence="2">
    <location>
        <position position="127"/>
    </location>
    <ligand>
        <name>Fe cation</name>
        <dbReference type="ChEBI" id="CHEBI:24875"/>
    </ligand>
</feature>
<feature type="binding site" evidence="2">
    <location>
        <position position="133"/>
    </location>
    <ligand>
        <name>ADP</name>
        <dbReference type="ChEBI" id="CHEBI:456216"/>
    </ligand>
</feature>
<feature type="binding site" evidence="2">
    <location>
        <begin position="170"/>
        <end position="175"/>
    </location>
    <ligand>
        <name>ADP</name>
        <dbReference type="ChEBI" id="CHEBI:456216"/>
    </ligand>
</feature>
<gene>
    <name type="primary">yqeK</name>
    <name type="ordered locus">BSU25630</name>
</gene>
<proteinExistence type="inferred from homology"/>
<reference key="1">
    <citation type="journal article" date="1996" name="Microbiology">
        <title>Systematic sequencing of the 283 kb 210 degrees-232 degrees region of the Bacillus subtilis genome containing the skin element and many sporulation genes.</title>
        <authorList>
            <person name="Mizuno M."/>
            <person name="Masuda S."/>
            <person name="Takemaru K."/>
            <person name="Hosono S."/>
            <person name="Sato T."/>
            <person name="Takeuchi M."/>
            <person name="Kobayashi Y."/>
        </authorList>
    </citation>
    <scope>NUCLEOTIDE SEQUENCE [GENOMIC DNA]</scope>
    <source>
        <strain>168 / JH642</strain>
    </source>
</reference>
<reference key="2">
    <citation type="journal article" date="1997" name="Nature">
        <title>The complete genome sequence of the Gram-positive bacterium Bacillus subtilis.</title>
        <authorList>
            <person name="Kunst F."/>
            <person name="Ogasawara N."/>
            <person name="Moszer I."/>
            <person name="Albertini A.M."/>
            <person name="Alloni G."/>
            <person name="Azevedo V."/>
            <person name="Bertero M.G."/>
            <person name="Bessieres P."/>
            <person name="Bolotin A."/>
            <person name="Borchert S."/>
            <person name="Borriss R."/>
            <person name="Boursier L."/>
            <person name="Brans A."/>
            <person name="Braun M."/>
            <person name="Brignell S.C."/>
            <person name="Bron S."/>
            <person name="Brouillet S."/>
            <person name="Bruschi C.V."/>
            <person name="Caldwell B."/>
            <person name="Capuano V."/>
            <person name="Carter N.M."/>
            <person name="Choi S.-K."/>
            <person name="Codani J.-J."/>
            <person name="Connerton I.F."/>
            <person name="Cummings N.J."/>
            <person name="Daniel R.A."/>
            <person name="Denizot F."/>
            <person name="Devine K.M."/>
            <person name="Duesterhoeft A."/>
            <person name="Ehrlich S.D."/>
            <person name="Emmerson P.T."/>
            <person name="Entian K.-D."/>
            <person name="Errington J."/>
            <person name="Fabret C."/>
            <person name="Ferrari E."/>
            <person name="Foulger D."/>
            <person name="Fritz C."/>
            <person name="Fujita M."/>
            <person name="Fujita Y."/>
            <person name="Fuma S."/>
            <person name="Galizzi A."/>
            <person name="Galleron N."/>
            <person name="Ghim S.-Y."/>
            <person name="Glaser P."/>
            <person name="Goffeau A."/>
            <person name="Golightly E.J."/>
            <person name="Grandi G."/>
            <person name="Guiseppi G."/>
            <person name="Guy B.J."/>
            <person name="Haga K."/>
            <person name="Haiech J."/>
            <person name="Harwood C.R."/>
            <person name="Henaut A."/>
            <person name="Hilbert H."/>
            <person name="Holsappel S."/>
            <person name="Hosono S."/>
            <person name="Hullo M.-F."/>
            <person name="Itaya M."/>
            <person name="Jones L.-M."/>
            <person name="Joris B."/>
            <person name="Karamata D."/>
            <person name="Kasahara Y."/>
            <person name="Klaerr-Blanchard M."/>
            <person name="Klein C."/>
            <person name="Kobayashi Y."/>
            <person name="Koetter P."/>
            <person name="Koningstein G."/>
            <person name="Krogh S."/>
            <person name="Kumano M."/>
            <person name="Kurita K."/>
            <person name="Lapidus A."/>
            <person name="Lardinois S."/>
            <person name="Lauber J."/>
            <person name="Lazarevic V."/>
            <person name="Lee S.-M."/>
            <person name="Levine A."/>
            <person name="Liu H."/>
            <person name="Masuda S."/>
            <person name="Mauel C."/>
            <person name="Medigue C."/>
            <person name="Medina N."/>
            <person name="Mellado R.P."/>
            <person name="Mizuno M."/>
            <person name="Moestl D."/>
            <person name="Nakai S."/>
            <person name="Noback M."/>
            <person name="Noone D."/>
            <person name="O'Reilly M."/>
            <person name="Ogawa K."/>
            <person name="Ogiwara A."/>
            <person name="Oudega B."/>
            <person name="Park S.-H."/>
            <person name="Parro V."/>
            <person name="Pohl T.M."/>
            <person name="Portetelle D."/>
            <person name="Porwollik S."/>
            <person name="Prescott A.M."/>
            <person name="Presecan E."/>
            <person name="Pujic P."/>
            <person name="Purnelle B."/>
            <person name="Rapoport G."/>
            <person name="Rey M."/>
            <person name="Reynolds S."/>
            <person name="Rieger M."/>
            <person name="Rivolta C."/>
            <person name="Rocha E."/>
            <person name="Roche B."/>
            <person name="Rose M."/>
            <person name="Sadaie Y."/>
            <person name="Sato T."/>
            <person name="Scanlan E."/>
            <person name="Schleich S."/>
            <person name="Schroeter R."/>
            <person name="Scoffone F."/>
            <person name="Sekiguchi J."/>
            <person name="Sekowska A."/>
            <person name="Seror S.J."/>
            <person name="Serror P."/>
            <person name="Shin B.-S."/>
            <person name="Soldo B."/>
            <person name="Sorokin A."/>
            <person name="Tacconi E."/>
            <person name="Takagi T."/>
            <person name="Takahashi H."/>
            <person name="Takemaru K."/>
            <person name="Takeuchi M."/>
            <person name="Tamakoshi A."/>
            <person name="Tanaka T."/>
            <person name="Terpstra P."/>
            <person name="Tognoni A."/>
            <person name="Tosato V."/>
            <person name="Uchiyama S."/>
            <person name="Vandenbol M."/>
            <person name="Vannier F."/>
            <person name="Vassarotti A."/>
            <person name="Viari A."/>
            <person name="Wambutt R."/>
            <person name="Wedler E."/>
            <person name="Wedler H."/>
            <person name="Weitzenegger T."/>
            <person name="Winters P."/>
            <person name="Wipat A."/>
            <person name="Yamamoto H."/>
            <person name="Yamane K."/>
            <person name="Yasumoto K."/>
            <person name="Yata K."/>
            <person name="Yoshida K."/>
            <person name="Yoshikawa H.-F."/>
            <person name="Zumstein E."/>
            <person name="Yoshikawa H."/>
            <person name="Danchin A."/>
        </authorList>
    </citation>
    <scope>NUCLEOTIDE SEQUENCE [LARGE SCALE GENOMIC DNA]</scope>
    <source>
        <strain>168</strain>
    </source>
</reference>
<reference key="3">
    <citation type="journal article" date="2004" name="J. Bacteriol.">
        <title>Genes involved in formation of structured multicellular communities by Bacillus subtilis.</title>
        <authorList>
            <person name="Branda S.S."/>
            <person name="Gonzalez-Pastor J.E."/>
            <person name="Dervyn E."/>
            <person name="Ehrlich S.D."/>
            <person name="Losick R."/>
            <person name="Kolter R."/>
        </authorList>
    </citation>
    <scope>ROLE IN FORMATION OF BIOFILMS</scope>
    <scope>DISRUPTION PHENOTYPE</scope>
    <source>
        <strain>168</strain>
        <strain>3610</strain>
    </source>
</reference>
<reference key="4">
    <citation type="journal article" date="2020" name="J. Bacteriol.">
        <title>Functional characterization of COG1713 (YqeK) as a novel diadenosine tetraphosphate hydrolase family.</title>
        <authorList>
            <person name="Minazzato G."/>
            <person name="Gasparrini M."/>
            <person name="Amici A."/>
            <person name="Cianci M."/>
            <person name="Mazzola F."/>
            <person name="Orsomando G."/>
            <person name="Sorci L."/>
            <person name="Raffaelli N."/>
        </authorList>
    </citation>
    <scope>DISRUPTION PHENOTYPE</scope>
</reference>
<protein>
    <recommendedName>
        <fullName evidence="6">Bis(5'-nucleosyl)-tetraphosphatase, symmetrical</fullName>
        <ecNumber evidence="1">3.6.1.41</ecNumber>
    </recommendedName>
    <alternativeName>
        <fullName evidence="6">Ap4A hydrolase</fullName>
    </alternativeName>
</protein>
<dbReference type="EC" id="3.6.1.41" evidence="1"/>
<dbReference type="EMBL" id="D84432">
    <property type="protein sequence ID" value="BAA12448.1"/>
    <property type="molecule type" value="Genomic_DNA"/>
</dbReference>
<dbReference type="EMBL" id="AL009126">
    <property type="protein sequence ID" value="CAB14505.1"/>
    <property type="molecule type" value="Genomic_DNA"/>
</dbReference>
<dbReference type="PIR" id="G69951">
    <property type="entry name" value="G69951"/>
</dbReference>
<dbReference type="RefSeq" id="NP_390441.1">
    <property type="nucleotide sequence ID" value="NC_000964.3"/>
</dbReference>
<dbReference type="RefSeq" id="WP_004399059.1">
    <property type="nucleotide sequence ID" value="NZ_OZ025638.1"/>
</dbReference>
<dbReference type="SMR" id="P54456"/>
<dbReference type="FunCoup" id="P54456">
    <property type="interactions" value="72"/>
</dbReference>
<dbReference type="STRING" id="224308.BSU25630"/>
<dbReference type="PaxDb" id="224308-BSU25630"/>
<dbReference type="EnsemblBacteria" id="CAB14505">
    <property type="protein sequence ID" value="CAB14505"/>
    <property type="gene ID" value="BSU_25630"/>
</dbReference>
<dbReference type="GeneID" id="937831"/>
<dbReference type="KEGG" id="bsu:BSU25630"/>
<dbReference type="PATRIC" id="fig|224308.179.peg.2786"/>
<dbReference type="eggNOG" id="COG1713">
    <property type="taxonomic scope" value="Bacteria"/>
</dbReference>
<dbReference type="InParanoid" id="P54456"/>
<dbReference type="OrthoDB" id="9782134at2"/>
<dbReference type="PhylomeDB" id="P54456"/>
<dbReference type="BioCyc" id="BSUB:BSU25630-MONOMER"/>
<dbReference type="Proteomes" id="UP000001570">
    <property type="component" value="Chromosome"/>
</dbReference>
<dbReference type="GO" id="GO:0016787">
    <property type="term" value="F:hydrolase activity"/>
    <property type="evidence" value="ECO:0007669"/>
    <property type="project" value="UniProtKB-KW"/>
</dbReference>
<dbReference type="GO" id="GO:0046872">
    <property type="term" value="F:metal ion binding"/>
    <property type="evidence" value="ECO:0007669"/>
    <property type="project" value="UniProtKB-KW"/>
</dbReference>
<dbReference type="GO" id="GO:0000166">
    <property type="term" value="F:nucleotide binding"/>
    <property type="evidence" value="ECO:0007669"/>
    <property type="project" value="UniProtKB-KW"/>
</dbReference>
<dbReference type="CDD" id="cd00077">
    <property type="entry name" value="HDc"/>
    <property type="match status" value="1"/>
</dbReference>
<dbReference type="Gene3D" id="1.10.3210.10">
    <property type="entry name" value="Hypothetical protein af1432"/>
    <property type="match status" value="1"/>
</dbReference>
<dbReference type="InterPro" id="IPR051094">
    <property type="entry name" value="Diverse_Catalytic_Enzymes"/>
</dbReference>
<dbReference type="InterPro" id="IPR003607">
    <property type="entry name" value="HD/PDEase_dom"/>
</dbReference>
<dbReference type="InterPro" id="IPR006674">
    <property type="entry name" value="HD_domain"/>
</dbReference>
<dbReference type="InterPro" id="IPR005249">
    <property type="entry name" value="YqeK"/>
</dbReference>
<dbReference type="NCBIfam" id="TIGR00488">
    <property type="entry name" value="bis(5'-nucleosyl)-tetraphosphatase (symmetrical) YqeK"/>
    <property type="match status" value="1"/>
</dbReference>
<dbReference type="PANTHER" id="PTHR35795:SF1">
    <property type="entry name" value="BIS(5'-NUCLEOSYL)-TETRAPHOSPHATASE, SYMMETRICAL"/>
    <property type="match status" value="1"/>
</dbReference>
<dbReference type="PANTHER" id="PTHR35795">
    <property type="entry name" value="SLR1885 PROTEIN"/>
    <property type="match status" value="1"/>
</dbReference>
<dbReference type="Pfam" id="PF01966">
    <property type="entry name" value="HD"/>
    <property type="match status" value="1"/>
</dbReference>
<dbReference type="SMART" id="SM00471">
    <property type="entry name" value="HDc"/>
    <property type="match status" value="1"/>
</dbReference>
<dbReference type="SUPFAM" id="SSF109604">
    <property type="entry name" value="HD-domain/PDEase-like"/>
    <property type="match status" value="1"/>
</dbReference>
<dbReference type="PROSITE" id="PS51831">
    <property type="entry name" value="HD"/>
    <property type="match status" value="1"/>
</dbReference>
<accession>P54456</accession>
<comment type="function">
    <text evidence="1">Hydrolyzes diadenosine 5',5'''-P1,P4-tetraphosphate (Ap4A) to yield ADP.</text>
</comment>
<comment type="catalytic activity">
    <reaction evidence="1">
        <text>P(1),P(4)-bis(5'-adenosyl) tetraphosphate + H2O = 2 ADP + 2 H(+)</text>
        <dbReference type="Rhea" id="RHEA:24252"/>
        <dbReference type="ChEBI" id="CHEBI:15377"/>
        <dbReference type="ChEBI" id="CHEBI:15378"/>
        <dbReference type="ChEBI" id="CHEBI:58141"/>
        <dbReference type="ChEBI" id="CHEBI:456216"/>
        <dbReference type="EC" id="3.6.1.41"/>
    </reaction>
</comment>
<comment type="subunit">
    <text evidence="1">Homodimer.</text>
</comment>
<comment type="disruption phenotype">
    <text evidence="4 5">Mutant shows increased levels of Ap4G, Ap4U, Ap3A and Ap4A (PubMed:32152217). Cells form pellicles that are initially flat and thin. The pellicles finally become thicker, their flat surfaces are broken by a number of broad pits, the inner surface of which are covered with fruiting bodies. The colonies also show a defect in gross morphology, in that their central region is flat ang glossy (PubMed:15175311).</text>
</comment>
<comment type="similarity">
    <text evidence="6">Belongs to the Ap4A hydrolase YqeK family.</text>
</comment>
<sequence>MNREEALACVKQQLTEHRYIHTVGVMNTAIELAERFGADSKKAEIAAIFHDYAKFRPKEEMKQIIAREKMPAHLLDHNPELWHAPVGAYLVQREAGVQDEDILDAIRYHTSGRPGMTLLEKVIYVADYIEPNRAFPGVDEVRKLAETDLNQALIQSIKNTMVFLMKKNQPVFPDTFLTYNWLVSGS</sequence>
<name>AP4AH_BACSU</name>
<organism>
    <name type="scientific">Bacillus subtilis (strain 168)</name>
    <dbReference type="NCBI Taxonomy" id="224308"/>
    <lineage>
        <taxon>Bacteria</taxon>
        <taxon>Bacillati</taxon>
        <taxon>Bacillota</taxon>
        <taxon>Bacilli</taxon>
        <taxon>Bacillales</taxon>
        <taxon>Bacillaceae</taxon>
        <taxon>Bacillus</taxon>
    </lineage>
</organism>
<evidence type="ECO:0000250" key="1">
    <source>
        <dbReference type="UniProtKB" id="Q2G297"/>
    </source>
</evidence>
<evidence type="ECO:0000250" key="2">
    <source>
        <dbReference type="UniProtKB" id="Q9KD90"/>
    </source>
</evidence>
<evidence type="ECO:0000255" key="3">
    <source>
        <dbReference type="PROSITE-ProRule" id="PRU01175"/>
    </source>
</evidence>
<evidence type="ECO:0000269" key="4">
    <source>
    </source>
</evidence>
<evidence type="ECO:0000269" key="5">
    <source>
    </source>
</evidence>
<evidence type="ECO:0000305" key="6"/>
<keyword id="KW-0378">Hydrolase</keyword>
<keyword id="KW-0408">Iron</keyword>
<keyword id="KW-0479">Metal-binding</keyword>
<keyword id="KW-0547">Nucleotide-binding</keyword>
<keyword id="KW-1185">Reference proteome</keyword>